<gene>
    <name type="ordered locus">BPSL0529</name>
</gene>
<keyword id="KW-0067">ATP-binding</keyword>
<keyword id="KW-0342">GTP-binding</keyword>
<keyword id="KW-0547">Nucleotide-binding</keyword>
<keyword id="KW-1185">Reference proteome</keyword>
<accession>Q63XL1</accession>
<sequence>MRIVLITGISGSGKSVALNALEDAGYYCVDNLPPHVLPELARYLAHEGQNRLAVAIDARSSASLDEMPGLIRALSREHDVRVLFLNASTQALIQRFSETRRRHPLSGSPSHDADVGLLVSLEEAIERERELVAPLAEFGHQIDTSNLRANVLRTWVKRFIEQKNDDLVLMFESFGFKRGVPLDADFMFDVRALPNPYYDHELRPLTGLDQPVVAFLDALPVVHQMLDDIETFLVKWLPHFREDNRSYLTVAIGCTGGQHRSVFLAETLAARLSRQASVIVRHRDAPVAVDASSRLVT</sequence>
<protein>
    <recommendedName>
        <fullName evidence="1">Nucleotide-binding protein BPSL0529</fullName>
    </recommendedName>
</protein>
<evidence type="ECO:0000255" key="1">
    <source>
        <dbReference type="HAMAP-Rule" id="MF_00636"/>
    </source>
</evidence>
<feature type="chain" id="PRO_0000107695" description="Nucleotide-binding protein BPSL0529">
    <location>
        <begin position="1"/>
        <end position="297"/>
    </location>
</feature>
<feature type="binding site" evidence="1">
    <location>
        <begin position="8"/>
        <end position="15"/>
    </location>
    <ligand>
        <name>ATP</name>
        <dbReference type="ChEBI" id="CHEBI:30616"/>
    </ligand>
</feature>
<feature type="binding site" evidence="1">
    <location>
        <begin position="57"/>
        <end position="60"/>
    </location>
    <ligand>
        <name>GTP</name>
        <dbReference type="ChEBI" id="CHEBI:37565"/>
    </ligand>
</feature>
<dbReference type="EMBL" id="BX571965">
    <property type="protein sequence ID" value="CAH34518.1"/>
    <property type="molecule type" value="Genomic_DNA"/>
</dbReference>
<dbReference type="RefSeq" id="YP_107154.1">
    <property type="nucleotide sequence ID" value="NC_006350.1"/>
</dbReference>
<dbReference type="SMR" id="Q63XL1"/>
<dbReference type="STRING" id="272560.BPSL0529"/>
<dbReference type="KEGG" id="bps:BPSL0529"/>
<dbReference type="PATRIC" id="fig|272560.51.peg.1119"/>
<dbReference type="eggNOG" id="COG1660">
    <property type="taxonomic scope" value="Bacteria"/>
</dbReference>
<dbReference type="Proteomes" id="UP000000605">
    <property type="component" value="Chromosome 1"/>
</dbReference>
<dbReference type="GO" id="GO:0005524">
    <property type="term" value="F:ATP binding"/>
    <property type="evidence" value="ECO:0007669"/>
    <property type="project" value="UniProtKB-UniRule"/>
</dbReference>
<dbReference type="GO" id="GO:0005525">
    <property type="term" value="F:GTP binding"/>
    <property type="evidence" value="ECO:0007669"/>
    <property type="project" value="UniProtKB-UniRule"/>
</dbReference>
<dbReference type="Gene3D" id="3.40.50.300">
    <property type="entry name" value="P-loop containing nucleotide triphosphate hydrolases"/>
    <property type="match status" value="1"/>
</dbReference>
<dbReference type="HAMAP" id="MF_00636">
    <property type="entry name" value="RapZ_like"/>
    <property type="match status" value="1"/>
</dbReference>
<dbReference type="InterPro" id="IPR027417">
    <property type="entry name" value="P-loop_NTPase"/>
</dbReference>
<dbReference type="InterPro" id="IPR005337">
    <property type="entry name" value="RapZ-like"/>
</dbReference>
<dbReference type="InterPro" id="IPR053930">
    <property type="entry name" value="RapZ-like_N"/>
</dbReference>
<dbReference type="InterPro" id="IPR053931">
    <property type="entry name" value="RapZ_C"/>
</dbReference>
<dbReference type="NCBIfam" id="NF003828">
    <property type="entry name" value="PRK05416.1"/>
    <property type="match status" value="1"/>
</dbReference>
<dbReference type="PANTHER" id="PTHR30448">
    <property type="entry name" value="RNASE ADAPTER PROTEIN RAPZ"/>
    <property type="match status" value="1"/>
</dbReference>
<dbReference type="PANTHER" id="PTHR30448:SF0">
    <property type="entry name" value="RNASE ADAPTER PROTEIN RAPZ"/>
    <property type="match status" value="1"/>
</dbReference>
<dbReference type="Pfam" id="PF22740">
    <property type="entry name" value="PapZ_C"/>
    <property type="match status" value="1"/>
</dbReference>
<dbReference type="Pfam" id="PF03668">
    <property type="entry name" value="RapZ-like_N"/>
    <property type="match status" value="1"/>
</dbReference>
<dbReference type="PIRSF" id="PIRSF005052">
    <property type="entry name" value="P-loopkin"/>
    <property type="match status" value="1"/>
</dbReference>
<dbReference type="SUPFAM" id="SSF52540">
    <property type="entry name" value="P-loop containing nucleoside triphosphate hydrolases"/>
    <property type="match status" value="1"/>
</dbReference>
<comment type="function">
    <text evidence="1">Displays ATPase and GTPase activities.</text>
</comment>
<comment type="similarity">
    <text evidence="1">Belongs to the RapZ-like family.</text>
</comment>
<reference key="1">
    <citation type="journal article" date="2004" name="Proc. Natl. Acad. Sci. U.S.A.">
        <title>Genomic plasticity of the causative agent of melioidosis, Burkholderia pseudomallei.</title>
        <authorList>
            <person name="Holden M.T.G."/>
            <person name="Titball R.W."/>
            <person name="Peacock S.J."/>
            <person name="Cerdeno-Tarraga A.-M."/>
            <person name="Atkins T."/>
            <person name="Crossman L.C."/>
            <person name="Pitt T."/>
            <person name="Churcher C."/>
            <person name="Mungall K.L."/>
            <person name="Bentley S.D."/>
            <person name="Sebaihia M."/>
            <person name="Thomson N.R."/>
            <person name="Bason N."/>
            <person name="Beacham I.R."/>
            <person name="Brooks K."/>
            <person name="Brown K.A."/>
            <person name="Brown N.F."/>
            <person name="Challis G.L."/>
            <person name="Cherevach I."/>
            <person name="Chillingworth T."/>
            <person name="Cronin A."/>
            <person name="Crossett B."/>
            <person name="Davis P."/>
            <person name="DeShazer D."/>
            <person name="Feltwell T."/>
            <person name="Fraser A."/>
            <person name="Hance Z."/>
            <person name="Hauser H."/>
            <person name="Holroyd S."/>
            <person name="Jagels K."/>
            <person name="Keith K.E."/>
            <person name="Maddison M."/>
            <person name="Moule S."/>
            <person name="Price C."/>
            <person name="Quail M.A."/>
            <person name="Rabbinowitsch E."/>
            <person name="Rutherford K."/>
            <person name="Sanders M."/>
            <person name="Simmonds M."/>
            <person name="Songsivilai S."/>
            <person name="Stevens K."/>
            <person name="Tumapa S."/>
            <person name="Vesaratchavest M."/>
            <person name="Whitehead S."/>
            <person name="Yeats C."/>
            <person name="Barrell B.G."/>
            <person name="Oyston P.C.F."/>
            <person name="Parkhill J."/>
        </authorList>
    </citation>
    <scope>NUCLEOTIDE SEQUENCE [LARGE SCALE GENOMIC DNA]</scope>
    <source>
        <strain>K96243</strain>
    </source>
</reference>
<organism>
    <name type="scientific">Burkholderia pseudomallei (strain K96243)</name>
    <dbReference type="NCBI Taxonomy" id="272560"/>
    <lineage>
        <taxon>Bacteria</taxon>
        <taxon>Pseudomonadati</taxon>
        <taxon>Pseudomonadota</taxon>
        <taxon>Betaproteobacteria</taxon>
        <taxon>Burkholderiales</taxon>
        <taxon>Burkholderiaceae</taxon>
        <taxon>Burkholderia</taxon>
        <taxon>pseudomallei group</taxon>
    </lineage>
</organism>
<proteinExistence type="inferred from homology"/>
<name>Y529_BURPS</name>